<reference key="1">
    <citation type="journal article" date="2010" name="J. Bacteriol.">
        <title>Genome sequence of the deep-rooted Yersinia pestis strain Angola reveals new insights into the evolution and pangenome of the plague bacterium.</title>
        <authorList>
            <person name="Eppinger M."/>
            <person name="Worsham P.L."/>
            <person name="Nikolich M.P."/>
            <person name="Riley D.R."/>
            <person name="Sebastian Y."/>
            <person name="Mou S."/>
            <person name="Achtman M."/>
            <person name="Lindler L.E."/>
            <person name="Ravel J."/>
        </authorList>
    </citation>
    <scope>NUCLEOTIDE SEQUENCE [LARGE SCALE GENOMIC DNA]</scope>
    <source>
        <strain>Angola</strain>
    </source>
</reference>
<keyword id="KW-0143">Chaperone</keyword>
<keyword id="KW-0963">Cytoplasm</keyword>
<keyword id="KW-0346">Stress response</keyword>
<gene>
    <name evidence="1" type="primary">grpE</name>
    <name type="ordered locus">YpAngola_A1378</name>
</gene>
<feature type="chain" id="PRO_1000137645" description="Protein GrpE">
    <location>
        <begin position="1"/>
        <end position="192"/>
    </location>
</feature>
<feature type="region of interest" description="Disordered" evidence="2">
    <location>
        <begin position="1"/>
        <end position="34"/>
    </location>
</feature>
<feature type="compositionally biased region" description="Polar residues" evidence="2">
    <location>
        <begin position="20"/>
        <end position="31"/>
    </location>
</feature>
<organism>
    <name type="scientific">Yersinia pestis bv. Antiqua (strain Angola)</name>
    <dbReference type="NCBI Taxonomy" id="349746"/>
    <lineage>
        <taxon>Bacteria</taxon>
        <taxon>Pseudomonadati</taxon>
        <taxon>Pseudomonadota</taxon>
        <taxon>Gammaproteobacteria</taxon>
        <taxon>Enterobacterales</taxon>
        <taxon>Yersiniaceae</taxon>
        <taxon>Yersinia</taxon>
    </lineage>
</organism>
<protein>
    <recommendedName>
        <fullName evidence="1">Protein GrpE</fullName>
    </recommendedName>
    <alternativeName>
        <fullName evidence="1">HSP-70 cofactor</fullName>
    </alternativeName>
</protein>
<proteinExistence type="inferred from homology"/>
<accession>A9R2E4</accession>
<name>GRPE_YERPG</name>
<comment type="function">
    <text evidence="1">Participates actively in the response to hyperosmotic and heat shock by preventing the aggregation of stress-denatured proteins, in association with DnaK and GrpE. It is the nucleotide exchange factor for DnaK and may function as a thermosensor. Unfolded proteins bind initially to DnaJ; upon interaction with the DnaJ-bound protein, DnaK hydrolyzes its bound ATP, resulting in the formation of a stable complex. GrpE releases ADP from DnaK; ATP binding to DnaK triggers the release of the substrate protein, thus completing the reaction cycle. Several rounds of ATP-dependent interactions between DnaJ, DnaK and GrpE are required for fully efficient folding.</text>
</comment>
<comment type="subunit">
    <text evidence="1">Homodimer.</text>
</comment>
<comment type="subcellular location">
    <subcellularLocation>
        <location evidence="1">Cytoplasm</location>
    </subcellularLocation>
</comment>
<comment type="similarity">
    <text evidence="1">Belongs to the GrpE family.</text>
</comment>
<sequence length="192" mass="21545">MSSKEQKTPNEQVSEEMENTAEQQVEATQETGECVDPRVAELEVQLSDALQRERESLLRAKAEVENIRRRTELDVEKAHKFALERFSSELLPVIDNLERALDTADKTNTELTSMIEGVELTLKSLLDAVGKFGIEVVGETHVPFNPEVHQAMTMLESADHEPNHVMMVMQKGYTLNGRLLRPAMVAVSKAKS</sequence>
<evidence type="ECO:0000255" key="1">
    <source>
        <dbReference type="HAMAP-Rule" id="MF_01151"/>
    </source>
</evidence>
<evidence type="ECO:0000256" key="2">
    <source>
        <dbReference type="SAM" id="MobiDB-lite"/>
    </source>
</evidence>
<dbReference type="EMBL" id="CP000901">
    <property type="protein sequence ID" value="ABX86490.1"/>
    <property type="molecule type" value="Genomic_DNA"/>
</dbReference>
<dbReference type="RefSeq" id="WP_002224622.1">
    <property type="nucleotide sequence ID" value="NZ_CP009935.1"/>
</dbReference>
<dbReference type="SMR" id="A9R2E4"/>
<dbReference type="GeneID" id="49786790"/>
<dbReference type="KEGG" id="ypg:YpAngola_A1378"/>
<dbReference type="PATRIC" id="fig|349746.12.peg.2345"/>
<dbReference type="GO" id="GO:0005829">
    <property type="term" value="C:cytosol"/>
    <property type="evidence" value="ECO:0007669"/>
    <property type="project" value="TreeGrafter"/>
</dbReference>
<dbReference type="GO" id="GO:0000774">
    <property type="term" value="F:adenyl-nucleotide exchange factor activity"/>
    <property type="evidence" value="ECO:0007669"/>
    <property type="project" value="InterPro"/>
</dbReference>
<dbReference type="GO" id="GO:0042803">
    <property type="term" value="F:protein homodimerization activity"/>
    <property type="evidence" value="ECO:0007669"/>
    <property type="project" value="InterPro"/>
</dbReference>
<dbReference type="GO" id="GO:0051087">
    <property type="term" value="F:protein-folding chaperone binding"/>
    <property type="evidence" value="ECO:0007669"/>
    <property type="project" value="InterPro"/>
</dbReference>
<dbReference type="GO" id="GO:0051082">
    <property type="term" value="F:unfolded protein binding"/>
    <property type="evidence" value="ECO:0007669"/>
    <property type="project" value="TreeGrafter"/>
</dbReference>
<dbReference type="GO" id="GO:0006457">
    <property type="term" value="P:protein folding"/>
    <property type="evidence" value="ECO:0007669"/>
    <property type="project" value="InterPro"/>
</dbReference>
<dbReference type="CDD" id="cd00446">
    <property type="entry name" value="GrpE"/>
    <property type="match status" value="1"/>
</dbReference>
<dbReference type="FunFam" id="2.30.22.10:FF:000001">
    <property type="entry name" value="Protein GrpE"/>
    <property type="match status" value="1"/>
</dbReference>
<dbReference type="FunFam" id="3.90.20.20:FF:000001">
    <property type="entry name" value="Protein GrpE"/>
    <property type="match status" value="1"/>
</dbReference>
<dbReference type="Gene3D" id="3.90.20.20">
    <property type="match status" value="1"/>
</dbReference>
<dbReference type="Gene3D" id="2.30.22.10">
    <property type="entry name" value="Head domain of nucleotide exchange factor GrpE"/>
    <property type="match status" value="1"/>
</dbReference>
<dbReference type="HAMAP" id="MF_01151">
    <property type="entry name" value="GrpE"/>
    <property type="match status" value="1"/>
</dbReference>
<dbReference type="InterPro" id="IPR000740">
    <property type="entry name" value="GrpE"/>
</dbReference>
<dbReference type="InterPro" id="IPR013805">
    <property type="entry name" value="GrpE_coiled_coil"/>
</dbReference>
<dbReference type="InterPro" id="IPR009012">
    <property type="entry name" value="GrpE_head"/>
</dbReference>
<dbReference type="NCBIfam" id="NF010737">
    <property type="entry name" value="PRK14139.1"/>
    <property type="match status" value="1"/>
</dbReference>
<dbReference type="NCBIfam" id="NF010738">
    <property type="entry name" value="PRK14140.1"/>
    <property type="match status" value="1"/>
</dbReference>
<dbReference type="NCBIfam" id="NF010748">
    <property type="entry name" value="PRK14150.1"/>
    <property type="match status" value="1"/>
</dbReference>
<dbReference type="PANTHER" id="PTHR21237">
    <property type="entry name" value="GRPE PROTEIN"/>
    <property type="match status" value="1"/>
</dbReference>
<dbReference type="PANTHER" id="PTHR21237:SF23">
    <property type="entry name" value="GRPE PROTEIN HOMOLOG, MITOCHONDRIAL"/>
    <property type="match status" value="1"/>
</dbReference>
<dbReference type="Pfam" id="PF01025">
    <property type="entry name" value="GrpE"/>
    <property type="match status" value="1"/>
</dbReference>
<dbReference type="PRINTS" id="PR00773">
    <property type="entry name" value="GRPEPROTEIN"/>
</dbReference>
<dbReference type="SUPFAM" id="SSF58014">
    <property type="entry name" value="Coiled-coil domain of nucleotide exchange factor GrpE"/>
    <property type="match status" value="1"/>
</dbReference>
<dbReference type="SUPFAM" id="SSF51064">
    <property type="entry name" value="Head domain of nucleotide exchange factor GrpE"/>
    <property type="match status" value="1"/>
</dbReference>
<dbReference type="PROSITE" id="PS01071">
    <property type="entry name" value="GRPE"/>
    <property type="match status" value="1"/>
</dbReference>